<name>NU5M_ROUAM</name>
<gene>
    <name type="primary">MT-ND5</name>
    <name type="synonym">MTND5</name>
    <name type="synonym">NADH5</name>
    <name type="synonym">ND5</name>
</gene>
<geneLocation type="mitochondrion"/>
<comment type="function">
    <text evidence="1">Core subunit of the mitochondrial membrane respiratory chain NADH dehydrogenase (Complex I) which catalyzes electron transfer from NADH through the respiratory chain, using ubiquinone as an electron acceptor. Essential for the catalytic activity and assembly of complex I.</text>
</comment>
<comment type="catalytic activity">
    <reaction evidence="1">
        <text>a ubiquinone + NADH + 5 H(+)(in) = a ubiquinol + NAD(+) + 4 H(+)(out)</text>
        <dbReference type="Rhea" id="RHEA:29091"/>
        <dbReference type="Rhea" id="RHEA-COMP:9565"/>
        <dbReference type="Rhea" id="RHEA-COMP:9566"/>
        <dbReference type="ChEBI" id="CHEBI:15378"/>
        <dbReference type="ChEBI" id="CHEBI:16389"/>
        <dbReference type="ChEBI" id="CHEBI:17976"/>
        <dbReference type="ChEBI" id="CHEBI:57540"/>
        <dbReference type="ChEBI" id="CHEBI:57945"/>
        <dbReference type="EC" id="7.1.1.2"/>
    </reaction>
</comment>
<comment type="subunit">
    <text evidence="2">Core subunit of respiratory chain NADH dehydrogenase (Complex I) which is composed of 45 different subunits.</text>
</comment>
<comment type="subcellular location">
    <subcellularLocation>
        <location evidence="2">Mitochondrion inner membrane</location>
        <topology evidence="3">Multi-pass membrane protein</topology>
    </subcellularLocation>
</comment>
<comment type="similarity">
    <text evidence="4">Belongs to the complex I subunit 5 family.</text>
</comment>
<evidence type="ECO:0000250" key="1">
    <source>
        <dbReference type="UniProtKB" id="P03915"/>
    </source>
</evidence>
<evidence type="ECO:0000250" key="2">
    <source>
        <dbReference type="UniProtKB" id="P03920"/>
    </source>
</evidence>
<evidence type="ECO:0000255" key="3"/>
<evidence type="ECO:0000305" key="4"/>
<sequence length="605" mass="67901">MNLRTSSTLLSLLILTVPIMASNFYPYTKKSYPIYVKTMVSYAFLVSLIPTMIFIQSGQETMISNWHWMTIQTLKLSLSFKLDYFSMILMPVALSVTWSIMEFSMWYMHSDPYINRFFKYLLLFLITMMLLVTANNLFQLFIGWEGVGIMSFLLIGWWYGRTDANTAALQAILYNRIGDVGFLVAMAWFLFNLNTWELQQIFTLNPTNTNLPLTGLLLAATGKSAQFGLHPWLPSAMEGPTPVSALLHSSTMVVAGIFLLIRFYPLTESNKTIQTMMLCLGAITTLFTAICALTQNDIKKIVAFSTSSQLGLMMVTVGINQPHLAFLHICTHAFFKAMLFLCSGSIIHSLNDEQDIRKMGGLYKSLPFTTTALITGSLALTGMPFLTGFYSKDLIIESINTSYTNAWALFITLIATSLTAVYSTRIIYFALLGQPRFPTLILINEDIPLLINPIKRLLVGSIFAGFFISNNITPTTIPQMTMPTYLKTTAMLVTLLGFIVALELNTATQNLKLTPPSNYLKFSNLLGYFPTIMHRLQPLTSLLTSQKVASMLLDLAWLENALPKSISIFQMKTSTLISSQKGQIKLYFLSFLITLTLSLIMLNFT</sequence>
<dbReference type="EC" id="7.1.1.2" evidence="1"/>
<dbReference type="EMBL" id="AB075978">
    <property type="protein sequence ID" value="BAC82493.1"/>
    <property type="molecule type" value="Genomic_DNA"/>
</dbReference>
<dbReference type="SMR" id="Q76LN2"/>
<dbReference type="GO" id="GO:0005743">
    <property type="term" value="C:mitochondrial inner membrane"/>
    <property type="evidence" value="ECO:0000250"/>
    <property type="project" value="UniProtKB"/>
</dbReference>
<dbReference type="GO" id="GO:0008137">
    <property type="term" value="F:NADH dehydrogenase (ubiquinone) activity"/>
    <property type="evidence" value="ECO:0000250"/>
    <property type="project" value="UniProtKB"/>
</dbReference>
<dbReference type="GO" id="GO:0015990">
    <property type="term" value="P:electron transport coupled proton transport"/>
    <property type="evidence" value="ECO:0007669"/>
    <property type="project" value="TreeGrafter"/>
</dbReference>
<dbReference type="GO" id="GO:0006120">
    <property type="term" value="P:mitochondrial electron transport, NADH to ubiquinone"/>
    <property type="evidence" value="ECO:0000250"/>
    <property type="project" value="UniProtKB"/>
</dbReference>
<dbReference type="GO" id="GO:0032981">
    <property type="term" value="P:mitochondrial respiratory chain complex I assembly"/>
    <property type="evidence" value="ECO:0000250"/>
    <property type="project" value="UniProtKB"/>
</dbReference>
<dbReference type="InterPro" id="IPR010934">
    <property type="entry name" value="NADH_DH_su5_C"/>
</dbReference>
<dbReference type="InterPro" id="IPR018393">
    <property type="entry name" value="NADHpl_OxRdtase_5_subgr"/>
</dbReference>
<dbReference type="InterPro" id="IPR001750">
    <property type="entry name" value="ND/Mrp_TM"/>
</dbReference>
<dbReference type="InterPro" id="IPR003945">
    <property type="entry name" value="NU5C-like"/>
</dbReference>
<dbReference type="InterPro" id="IPR001516">
    <property type="entry name" value="Proton_antipo_N"/>
</dbReference>
<dbReference type="NCBIfam" id="TIGR01974">
    <property type="entry name" value="NDH_I_L"/>
    <property type="match status" value="1"/>
</dbReference>
<dbReference type="PANTHER" id="PTHR42829">
    <property type="entry name" value="NADH-UBIQUINONE OXIDOREDUCTASE CHAIN 5"/>
    <property type="match status" value="1"/>
</dbReference>
<dbReference type="PANTHER" id="PTHR42829:SF2">
    <property type="entry name" value="NADH-UBIQUINONE OXIDOREDUCTASE CHAIN 5"/>
    <property type="match status" value="1"/>
</dbReference>
<dbReference type="Pfam" id="PF06455">
    <property type="entry name" value="NADH5_C"/>
    <property type="match status" value="1"/>
</dbReference>
<dbReference type="Pfam" id="PF00361">
    <property type="entry name" value="Proton_antipo_M"/>
    <property type="match status" value="1"/>
</dbReference>
<dbReference type="Pfam" id="PF00662">
    <property type="entry name" value="Proton_antipo_N"/>
    <property type="match status" value="1"/>
</dbReference>
<dbReference type="PRINTS" id="PR01434">
    <property type="entry name" value="NADHDHGNASE5"/>
</dbReference>
<reference key="1">
    <citation type="submission" date="2001-12" db="EMBL/GenBank/DDBJ databases">
        <title>Phylogenetic position of the Philippine flying lemur (order Dermoptera) within Eutheria using DNA sequences of Cyt b and ND5 genes.</title>
        <authorList>
            <person name="Bastian S.T. Jr."/>
            <person name="Tanaka K."/>
            <person name="Anunciado R.P.V."/>
            <person name="Natural N.G."/>
            <person name="Sumalde A.C."/>
            <person name="Namikawa T."/>
        </authorList>
    </citation>
    <scope>NUCLEOTIDE SEQUENCE [GENOMIC DNA]</scope>
</reference>
<organism>
    <name type="scientific">Rousettus amplexicaudatus</name>
    <name type="common">Common rousette</name>
    <name type="synonym">Pteropus amplexicaudatus</name>
    <dbReference type="NCBI Taxonomy" id="58083"/>
    <lineage>
        <taxon>Eukaryota</taxon>
        <taxon>Metazoa</taxon>
        <taxon>Chordata</taxon>
        <taxon>Craniata</taxon>
        <taxon>Vertebrata</taxon>
        <taxon>Euteleostomi</taxon>
        <taxon>Mammalia</taxon>
        <taxon>Eutheria</taxon>
        <taxon>Laurasiatheria</taxon>
        <taxon>Chiroptera</taxon>
        <taxon>Yinpterochiroptera</taxon>
        <taxon>Pteropodoidea</taxon>
        <taxon>Pteropodidae</taxon>
        <taxon>Rousettinae</taxon>
        <taxon>Rousettus</taxon>
    </lineage>
</organism>
<feature type="chain" id="PRO_0000118145" description="NADH-ubiquinone oxidoreductase chain 5">
    <location>
        <begin position="1"/>
        <end position="605"/>
    </location>
</feature>
<feature type="transmembrane region" description="Helical" evidence="3">
    <location>
        <begin position="8"/>
        <end position="28"/>
    </location>
</feature>
<feature type="transmembrane region" description="Helical" evidence="3">
    <location>
        <begin position="34"/>
        <end position="54"/>
    </location>
</feature>
<feature type="transmembrane region" description="Helical" evidence="3">
    <location>
        <begin position="87"/>
        <end position="107"/>
    </location>
</feature>
<feature type="transmembrane region" description="Helical" evidence="3">
    <location>
        <begin position="117"/>
        <end position="137"/>
    </location>
</feature>
<feature type="transmembrane region" description="Helical" evidence="3">
    <location>
        <begin position="140"/>
        <end position="160"/>
    </location>
</feature>
<feature type="transmembrane region" description="Helical" evidence="3">
    <location>
        <begin position="171"/>
        <end position="191"/>
    </location>
</feature>
<feature type="transmembrane region" description="Helical" evidence="3">
    <location>
        <begin position="241"/>
        <end position="261"/>
    </location>
</feature>
<feature type="transmembrane region" description="Helical" evidence="3">
    <location>
        <begin position="273"/>
        <end position="293"/>
    </location>
</feature>
<feature type="transmembrane region" description="Helical" evidence="3">
    <location>
        <begin position="301"/>
        <end position="321"/>
    </location>
</feature>
<feature type="transmembrane region" description="Helical" evidence="3">
    <location>
        <begin position="324"/>
        <end position="344"/>
    </location>
</feature>
<feature type="transmembrane region" description="Helical" evidence="3">
    <location>
        <begin position="366"/>
        <end position="386"/>
    </location>
</feature>
<feature type="transmembrane region" description="Helical" evidence="3">
    <location>
        <begin position="409"/>
        <end position="429"/>
    </location>
</feature>
<feature type="transmembrane region" description="Helical" evidence="3">
    <location>
        <begin position="457"/>
        <end position="477"/>
    </location>
</feature>
<feature type="transmembrane region" description="Helical" evidence="3">
    <location>
        <begin position="482"/>
        <end position="502"/>
    </location>
</feature>
<feature type="transmembrane region" description="Helical" evidence="3">
    <location>
        <begin position="584"/>
        <end position="604"/>
    </location>
</feature>
<keyword id="KW-0249">Electron transport</keyword>
<keyword id="KW-0472">Membrane</keyword>
<keyword id="KW-0496">Mitochondrion</keyword>
<keyword id="KW-0999">Mitochondrion inner membrane</keyword>
<keyword id="KW-0520">NAD</keyword>
<keyword id="KW-0679">Respiratory chain</keyword>
<keyword id="KW-1278">Translocase</keyword>
<keyword id="KW-0812">Transmembrane</keyword>
<keyword id="KW-1133">Transmembrane helix</keyword>
<keyword id="KW-0813">Transport</keyword>
<keyword id="KW-0830">Ubiquinone</keyword>
<proteinExistence type="inferred from homology"/>
<protein>
    <recommendedName>
        <fullName>NADH-ubiquinone oxidoreductase chain 5</fullName>
        <ecNumber evidence="1">7.1.1.2</ecNumber>
    </recommendedName>
    <alternativeName>
        <fullName>NADH dehydrogenase subunit 5</fullName>
    </alternativeName>
</protein>
<accession>Q76LN2</accession>